<comment type="function">
    <text evidence="1">May play a role in sperm motility, especially in the regulation of flagellar function.</text>
</comment>
<comment type="catalytic activity">
    <reaction>
        <text>L-seryl-[protein] + ATP = O-phospho-L-seryl-[protein] + ADP + H(+)</text>
        <dbReference type="Rhea" id="RHEA:17989"/>
        <dbReference type="Rhea" id="RHEA-COMP:9863"/>
        <dbReference type="Rhea" id="RHEA-COMP:11604"/>
        <dbReference type="ChEBI" id="CHEBI:15378"/>
        <dbReference type="ChEBI" id="CHEBI:29999"/>
        <dbReference type="ChEBI" id="CHEBI:30616"/>
        <dbReference type="ChEBI" id="CHEBI:83421"/>
        <dbReference type="ChEBI" id="CHEBI:456216"/>
        <dbReference type="EC" id="2.7.11.1"/>
    </reaction>
</comment>
<comment type="catalytic activity">
    <reaction>
        <text>L-threonyl-[protein] + ATP = O-phospho-L-threonyl-[protein] + ADP + H(+)</text>
        <dbReference type="Rhea" id="RHEA:46608"/>
        <dbReference type="Rhea" id="RHEA-COMP:11060"/>
        <dbReference type="Rhea" id="RHEA-COMP:11605"/>
        <dbReference type="ChEBI" id="CHEBI:15378"/>
        <dbReference type="ChEBI" id="CHEBI:30013"/>
        <dbReference type="ChEBI" id="CHEBI:30616"/>
        <dbReference type="ChEBI" id="CHEBI:61977"/>
        <dbReference type="ChEBI" id="CHEBI:456216"/>
        <dbReference type="EC" id="2.7.11.1"/>
    </reaction>
</comment>
<comment type="similarity">
    <text evidence="5">Belongs to the protein kinase superfamily. CAMK Ser/Thr protein kinase family. Smok subfamily.</text>
</comment>
<organism>
    <name type="scientific">Rattus norvegicus</name>
    <name type="common">Rat</name>
    <dbReference type="NCBI Taxonomy" id="10116"/>
    <lineage>
        <taxon>Eukaryota</taxon>
        <taxon>Metazoa</taxon>
        <taxon>Chordata</taxon>
        <taxon>Craniata</taxon>
        <taxon>Vertebrata</taxon>
        <taxon>Euteleostomi</taxon>
        <taxon>Mammalia</taxon>
        <taxon>Eutheria</taxon>
        <taxon>Euarchontoglires</taxon>
        <taxon>Glires</taxon>
        <taxon>Rodentia</taxon>
        <taxon>Myomorpha</taxon>
        <taxon>Muroidea</taxon>
        <taxon>Muridae</taxon>
        <taxon>Murinae</taxon>
        <taxon>Rattus</taxon>
    </lineage>
</organism>
<dbReference type="EC" id="2.7.11.1"/>
<dbReference type="EMBL" id="BC128761">
    <property type="protein sequence ID" value="AAI28762.1"/>
    <property type="molecule type" value="mRNA"/>
</dbReference>
<dbReference type="RefSeq" id="NP_001094414.1">
    <property type="nucleotide sequence ID" value="NM_001100944.1"/>
</dbReference>
<dbReference type="RefSeq" id="XP_017443089.1">
    <property type="nucleotide sequence ID" value="XM_017587600.1"/>
</dbReference>
<dbReference type="RefSeq" id="XP_017443090.1">
    <property type="nucleotide sequence ID" value="XM_017587601.1"/>
</dbReference>
<dbReference type="RefSeq" id="XP_017455531.1">
    <property type="nucleotide sequence ID" value="XM_017600042.1"/>
</dbReference>
<dbReference type="RefSeq" id="XP_038950323.1">
    <property type="nucleotide sequence ID" value="XM_039094395.2"/>
</dbReference>
<dbReference type="RefSeq" id="XP_063131312.1">
    <property type="nucleotide sequence ID" value="XM_063275242.1"/>
</dbReference>
<dbReference type="SMR" id="A1A5Q6"/>
<dbReference type="FunCoup" id="A1A5Q6">
    <property type="interactions" value="200"/>
</dbReference>
<dbReference type="STRING" id="10116.ENSRNOP00000033067"/>
<dbReference type="PaxDb" id="10116-ENSRNOP00000033067"/>
<dbReference type="PeptideAtlas" id="A1A5Q6"/>
<dbReference type="Ensembl" id="ENSRNOT00000039592.6">
    <property type="protein sequence ID" value="ENSRNOP00000033067.5"/>
    <property type="gene ID" value="ENSRNOG00000022181.6"/>
</dbReference>
<dbReference type="GeneID" id="290818"/>
<dbReference type="KEGG" id="rno:290818"/>
<dbReference type="UCSC" id="RGD:1562638">
    <property type="organism name" value="rat"/>
</dbReference>
<dbReference type="AGR" id="RGD:1562638"/>
<dbReference type="CTD" id="290818"/>
<dbReference type="RGD" id="1562638">
    <property type="gene designation" value="Smok"/>
</dbReference>
<dbReference type="eggNOG" id="KOG0586">
    <property type="taxonomic scope" value="Eukaryota"/>
</dbReference>
<dbReference type="GeneTree" id="ENSGT00940000160886"/>
<dbReference type="HOGENOM" id="CLU_000288_157_6_1"/>
<dbReference type="InParanoid" id="A1A5Q6"/>
<dbReference type="OMA" id="HLHGRRQ"/>
<dbReference type="OrthoDB" id="9583223at2759"/>
<dbReference type="PhylomeDB" id="A1A5Q6"/>
<dbReference type="PRO" id="PR:A1A5Q6"/>
<dbReference type="Proteomes" id="UP000002494">
    <property type="component" value="Chromosome 16"/>
</dbReference>
<dbReference type="Bgee" id="ENSRNOG00000022181">
    <property type="expression patterns" value="Expressed in testis"/>
</dbReference>
<dbReference type="GO" id="GO:0005524">
    <property type="term" value="F:ATP binding"/>
    <property type="evidence" value="ECO:0007669"/>
    <property type="project" value="UniProtKB-KW"/>
</dbReference>
<dbReference type="GO" id="GO:0106310">
    <property type="term" value="F:protein serine kinase activity"/>
    <property type="evidence" value="ECO:0007669"/>
    <property type="project" value="RHEA"/>
</dbReference>
<dbReference type="GO" id="GO:0004674">
    <property type="term" value="F:protein serine/threonine kinase activity"/>
    <property type="evidence" value="ECO:0000318"/>
    <property type="project" value="GO_Central"/>
</dbReference>
<dbReference type="GO" id="GO:0042149">
    <property type="term" value="P:cellular response to glucose starvation"/>
    <property type="evidence" value="ECO:0000318"/>
    <property type="project" value="GO_Central"/>
</dbReference>
<dbReference type="CDD" id="cd14003">
    <property type="entry name" value="STKc_AMPK-like"/>
    <property type="match status" value="1"/>
</dbReference>
<dbReference type="CDD" id="cd14337">
    <property type="entry name" value="UBA_MARK_Par1"/>
    <property type="match status" value="1"/>
</dbReference>
<dbReference type="FunFam" id="1.10.510.10:FF:000002">
    <property type="entry name" value="Non-specific serine/threonine protein kinase"/>
    <property type="match status" value="1"/>
</dbReference>
<dbReference type="FunFam" id="1.10.8.10:FF:000005">
    <property type="entry name" value="Non-specific serine/threonine protein kinase"/>
    <property type="match status" value="1"/>
</dbReference>
<dbReference type="FunFam" id="3.30.200.20:FF:000003">
    <property type="entry name" value="Non-specific serine/threonine protein kinase"/>
    <property type="match status" value="1"/>
</dbReference>
<dbReference type="Gene3D" id="1.10.8.10">
    <property type="entry name" value="DNA helicase RuvA subunit, C-terminal domain"/>
    <property type="match status" value="1"/>
</dbReference>
<dbReference type="Gene3D" id="3.30.200.20">
    <property type="entry name" value="Phosphorylase Kinase, domain 1"/>
    <property type="match status" value="1"/>
</dbReference>
<dbReference type="Gene3D" id="1.10.510.10">
    <property type="entry name" value="Transferase(Phosphotransferase) domain 1"/>
    <property type="match status" value="1"/>
</dbReference>
<dbReference type="InterPro" id="IPR011009">
    <property type="entry name" value="Kinase-like_dom_sf"/>
</dbReference>
<dbReference type="InterPro" id="IPR000719">
    <property type="entry name" value="Prot_kinase_dom"/>
</dbReference>
<dbReference type="InterPro" id="IPR017441">
    <property type="entry name" value="Protein_kinase_ATP_BS"/>
</dbReference>
<dbReference type="InterPro" id="IPR008271">
    <property type="entry name" value="Ser/Thr_kinase_AS"/>
</dbReference>
<dbReference type="PANTHER" id="PTHR24346">
    <property type="entry name" value="MAP/MICROTUBULE AFFINITY-REGULATING KINASE"/>
    <property type="match status" value="1"/>
</dbReference>
<dbReference type="PANTHER" id="PTHR24346:SF85">
    <property type="entry name" value="RIKEN CDNA 1810024B03 GENE"/>
    <property type="match status" value="1"/>
</dbReference>
<dbReference type="Pfam" id="PF00069">
    <property type="entry name" value="Pkinase"/>
    <property type="match status" value="1"/>
</dbReference>
<dbReference type="SMART" id="SM00220">
    <property type="entry name" value="S_TKc"/>
    <property type="match status" value="1"/>
</dbReference>
<dbReference type="SUPFAM" id="SSF56112">
    <property type="entry name" value="Protein kinase-like (PK-like)"/>
    <property type="match status" value="1"/>
</dbReference>
<dbReference type="PROSITE" id="PS00107">
    <property type="entry name" value="PROTEIN_KINASE_ATP"/>
    <property type="match status" value="1"/>
</dbReference>
<dbReference type="PROSITE" id="PS50011">
    <property type="entry name" value="PROTEIN_KINASE_DOM"/>
    <property type="match status" value="1"/>
</dbReference>
<dbReference type="PROSITE" id="PS00108">
    <property type="entry name" value="PROTEIN_KINASE_ST"/>
    <property type="match status" value="1"/>
</dbReference>
<keyword id="KW-0067">ATP-binding</keyword>
<keyword id="KW-0418">Kinase</keyword>
<keyword id="KW-0547">Nucleotide-binding</keyword>
<keyword id="KW-1185">Reference proteome</keyword>
<keyword id="KW-0723">Serine/threonine-protein kinase</keyword>
<keyword id="KW-0808">Transferase</keyword>
<feature type="chain" id="PRO_0000307878" description="Sperm motility kinase">
    <location>
        <begin position="1"/>
        <end position="654"/>
    </location>
</feature>
<feature type="domain" description="Protein kinase" evidence="2">
    <location>
        <begin position="24"/>
        <end position="271"/>
    </location>
</feature>
<feature type="domain" description="UBA">
    <location>
        <begin position="289"/>
        <end position="329"/>
    </location>
</feature>
<feature type="region of interest" description="Disordered" evidence="4">
    <location>
        <begin position="336"/>
        <end position="369"/>
    </location>
</feature>
<feature type="region of interest" description="Disordered" evidence="4">
    <location>
        <begin position="563"/>
        <end position="616"/>
    </location>
</feature>
<feature type="compositionally biased region" description="Polar residues" evidence="4">
    <location>
        <begin position="342"/>
        <end position="369"/>
    </location>
</feature>
<feature type="active site" description="Proton acceptor" evidence="2 3">
    <location>
        <position position="142"/>
    </location>
</feature>
<feature type="binding site" evidence="2">
    <location>
        <begin position="30"/>
        <end position="38"/>
    </location>
    <ligand>
        <name>ATP</name>
        <dbReference type="ChEBI" id="CHEBI:30616"/>
    </ligand>
</feature>
<feature type="binding site" evidence="2">
    <location>
        <position position="53"/>
    </location>
    <ligand>
        <name>ATP</name>
        <dbReference type="ChEBI" id="CHEBI:30616"/>
    </ligand>
</feature>
<evidence type="ECO:0000250" key="1"/>
<evidence type="ECO:0000255" key="2">
    <source>
        <dbReference type="PROSITE-ProRule" id="PRU00159"/>
    </source>
</evidence>
<evidence type="ECO:0000255" key="3">
    <source>
        <dbReference type="PROSITE-ProRule" id="PRU10027"/>
    </source>
</evidence>
<evidence type="ECO:0000256" key="4">
    <source>
        <dbReference type="SAM" id="MobiDB-lite"/>
    </source>
</evidence>
<evidence type="ECO:0000305" key="5"/>
<reference key="1">
    <citation type="journal article" date="2004" name="Genome Res.">
        <title>The status, quality, and expansion of the NIH full-length cDNA project: the Mammalian Gene Collection (MGC).</title>
        <authorList>
            <consortium name="The MGC Project Team"/>
        </authorList>
    </citation>
    <scope>NUCLEOTIDE SEQUENCE [LARGE SCALE MRNA]</scope>
    <source>
        <tissue>Testis</tissue>
    </source>
</reference>
<accession>A1A5Q6</accession>
<name>SMK_RAT</name>
<protein>
    <recommendedName>
        <fullName>Sperm motility kinase</fullName>
        <ecNumber>2.7.11.1</ecNumber>
    </recommendedName>
</protein>
<sequence length="654" mass="73847">MKRWQVCQDLRSSPFQEDALTDHYRILASLGQGGFGEVKLASHLLTQTKVAIKVLPKSNKNLLLKSEIEIMKSLDHPHIIKLLHIIDTNENIFIVLEHAVGGELLTRIEDFGYLPEEECNRLFRQMVLALQYCHQRGIIHRDIKPENILLDHKGNVKLSDFGLSTKIVMGQKLTTLCGTLPYCAPELFNLNGYDGQAIDVWSLGVVLYYMATGCLPFQGFTYQAIKQKILSGRYSVNFRLSPDLWDVIAKLLTVNPRERPRVHEILRFNWLKNENEVSPSSLGGNTDSHPDPTILVMMGDMGYEQGQIRESLRERKFDQVMATYLMLREKACSEDKSIKTPHPTQCAQTLKSTGSTTEKQTTLRRGSSLPTLTTFYLPSKLESLNKEKRTTMRHTMPPNLNCFNKSESLNKGRRTIVSHTISPTLNCFNKSESLNKGKRTIVRHTMPPKKTSPVRRICPRLHKSFGMGSASEDSSKRNSSDPSLTIFSSQSFMSAFKYGSTYSKRKAFLQCILHYHASQEEDQYKTTIIPSGKLNTTVPPNSLQEDQPTGHLHNVLTAGAVDNRNLQEKSPPFSTTATKGEGPAIKERESIPSSPRAPREQFRGRSQTPPRAPFRRRVWKTLKSGFLKGLGSLCCCLPIQKKVHPASNRVPPMK</sequence>
<proteinExistence type="evidence at transcript level"/>
<gene>
    <name type="primary">Smok</name>
</gene>